<protein>
    <recommendedName>
        <fullName evidence="1">Erythronate-4-phosphate dehydrogenase</fullName>
        <ecNumber evidence="1">1.1.1.290</ecNumber>
    </recommendedName>
</protein>
<name>PDXB_YERPP</name>
<evidence type="ECO:0000255" key="1">
    <source>
        <dbReference type="HAMAP-Rule" id="MF_01825"/>
    </source>
</evidence>
<evidence type="ECO:0000305" key="2"/>
<sequence length="375" mass="41167">MKILVDENMPYAEELFRRLGDVQAVPGRPIPRDALVDADALMVRSVTKVNEALLHGTSIGFVGTATAGTDHVDDTWLRQQGIGFSAAPGCNAIAVVEYVFSALMMMAERDGFQLRDKTVGIIGVGNVGSRLNARLQALGVRTLLCDPPRADRGDNEAFWPLEKLVREADVLTFHTPLNKTGAYQSLHMADDELLAALPDGRILINACRGAVVDNAALLRALEKGKKLSVVLDVWEPEPDLSLPLLARVDIGTPHIAGYTLEGKARGTTQVFEAFSQHLGQPQSVELASLLPVPEFSHLRLNGELDEGKLKRLMHLVYDVRRDDAPLRHVAGLPGEFDRLRKHYQERREWSSLCVQCDDATSAGLLQQLGFTTQLL</sequence>
<gene>
    <name evidence="1" type="primary">pdxB</name>
    <name type="ordered locus">YPDSF_1997</name>
</gene>
<dbReference type="EC" id="1.1.1.290" evidence="1"/>
<dbReference type="EMBL" id="CP000668">
    <property type="protein sequence ID" value="ABP40378.1"/>
    <property type="status" value="ALT_INIT"/>
    <property type="molecule type" value="Genomic_DNA"/>
</dbReference>
<dbReference type="RefSeq" id="WP_002209725.1">
    <property type="nucleotide sequence ID" value="NZ_CP009715.1"/>
</dbReference>
<dbReference type="SMR" id="A4TM66"/>
<dbReference type="GeneID" id="57975926"/>
<dbReference type="KEGG" id="ypp:YPDSF_1997"/>
<dbReference type="PATRIC" id="fig|386656.14.peg.3466"/>
<dbReference type="UniPathway" id="UPA00244">
    <property type="reaction ID" value="UER00310"/>
</dbReference>
<dbReference type="GO" id="GO:0005829">
    <property type="term" value="C:cytosol"/>
    <property type="evidence" value="ECO:0007669"/>
    <property type="project" value="TreeGrafter"/>
</dbReference>
<dbReference type="GO" id="GO:0033711">
    <property type="term" value="F:4-phosphoerythronate dehydrogenase activity"/>
    <property type="evidence" value="ECO:0007669"/>
    <property type="project" value="UniProtKB-EC"/>
</dbReference>
<dbReference type="GO" id="GO:0051287">
    <property type="term" value="F:NAD binding"/>
    <property type="evidence" value="ECO:0007669"/>
    <property type="project" value="InterPro"/>
</dbReference>
<dbReference type="GO" id="GO:0046983">
    <property type="term" value="F:protein dimerization activity"/>
    <property type="evidence" value="ECO:0007669"/>
    <property type="project" value="InterPro"/>
</dbReference>
<dbReference type="GO" id="GO:0036001">
    <property type="term" value="P:'de novo' pyridoxal 5'-phosphate biosynthetic process"/>
    <property type="evidence" value="ECO:0007669"/>
    <property type="project" value="TreeGrafter"/>
</dbReference>
<dbReference type="GO" id="GO:0008615">
    <property type="term" value="P:pyridoxine biosynthetic process"/>
    <property type="evidence" value="ECO:0007669"/>
    <property type="project" value="UniProtKB-UniRule"/>
</dbReference>
<dbReference type="CDD" id="cd12158">
    <property type="entry name" value="ErythrP_dh"/>
    <property type="match status" value="1"/>
</dbReference>
<dbReference type="FunFam" id="3.30.1370.170:FF:000001">
    <property type="entry name" value="Erythronate-4-phosphate dehydrogenase"/>
    <property type="match status" value="1"/>
</dbReference>
<dbReference type="FunFam" id="3.40.50.720:FF:000093">
    <property type="entry name" value="Erythronate-4-phosphate dehydrogenase"/>
    <property type="match status" value="1"/>
</dbReference>
<dbReference type="Gene3D" id="3.30.1370.170">
    <property type="match status" value="1"/>
</dbReference>
<dbReference type="Gene3D" id="3.40.50.720">
    <property type="entry name" value="NAD(P)-binding Rossmann-like Domain"/>
    <property type="match status" value="2"/>
</dbReference>
<dbReference type="HAMAP" id="MF_01825">
    <property type="entry name" value="PdxB"/>
    <property type="match status" value="1"/>
</dbReference>
<dbReference type="InterPro" id="IPR006139">
    <property type="entry name" value="D-isomer_2_OHA_DH_cat_dom"/>
</dbReference>
<dbReference type="InterPro" id="IPR029753">
    <property type="entry name" value="D-isomer_DH_CS"/>
</dbReference>
<dbReference type="InterPro" id="IPR029752">
    <property type="entry name" value="D-isomer_DH_CS1"/>
</dbReference>
<dbReference type="InterPro" id="IPR006140">
    <property type="entry name" value="D-isomer_DH_NAD-bd"/>
</dbReference>
<dbReference type="InterPro" id="IPR020921">
    <property type="entry name" value="Erythronate-4-P_DHase"/>
</dbReference>
<dbReference type="InterPro" id="IPR024531">
    <property type="entry name" value="Erythronate-4-P_DHase_dimer"/>
</dbReference>
<dbReference type="InterPro" id="IPR036291">
    <property type="entry name" value="NAD(P)-bd_dom_sf"/>
</dbReference>
<dbReference type="InterPro" id="IPR038251">
    <property type="entry name" value="PdxB_dimer_sf"/>
</dbReference>
<dbReference type="NCBIfam" id="NF001309">
    <property type="entry name" value="PRK00257.1"/>
    <property type="match status" value="1"/>
</dbReference>
<dbReference type="PANTHER" id="PTHR42938">
    <property type="entry name" value="FORMATE DEHYDROGENASE 1"/>
    <property type="match status" value="1"/>
</dbReference>
<dbReference type="PANTHER" id="PTHR42938:SF9">
    <property type="entry name" value="FORMATE DEHYDROGENASE 1"/>
    <property type="match status" value="1"/>
</dbReference>
<dbReference type="Pfam" id="PF00389">
    <property type="entry name" value="2-Hacid_dh"/>
    <property type="match status" value="1"/>
</dbReference>
<dbReference type="Pfam" id="PF02826">
    <property type="entry name" value="2-Hacid_dh_C"/>
    <property type="match status" value="1"/>
</dbReference>
<dbReference type="Pfam" id="PF11890">
    <property type="entry name" value="DUF3410"/>
    <property type="match status" value="1"/>
</dbReference>
<dbReference type="SUPFAM" id="SSF52283">
    <property type="entry name" value="Formate/glycerate dehydrogenase catalytic domain-like"/>
    <property type="match status" value="1"/>
</dbReference>
<dbReference type="SUPFAM" id="SSF51735">
    <property type="entry name" value="NAD(P)-binding Rossmann-fold domains"/>
    <property type="match status" value="1"/>
</dbReference>
<dbReference type="PROSITE" id="PS00065">
    <property type="entry name" value="D_2_HYDROXYACID_DH_1"/>
    <property type="match status" value="1"/>
</dbReference>
<dbReference type="PROSITE" id="PS00671">
    <property type="entry name" value="D_2_HYDROXYACID_DH_3"/>
    <property type="match status" value="1"/>
</dbReference>
<accession>A4TM66</accession>
<proteinExistence type="inferred from homology"/>
<reference key="1">
    <citation type="submission" date="2007-02" db="EMBL/GenBank/DDBJ databases">
        <title>Complete sequence of chromosome of Yersinia pestis Pestoides F.</title>
        <authorList>
            <consortium name="US DOE Joint Genome Institute"/>
            <person name="Copeland A."/>
            <person name="Lucas S."/>
            <person name="Lapidus A."/>
            <person name="Barry K."/>
            <person name="Detter J.C."/>
            <person name="Glavina del Rio T."/>
            <person name="Hammon N."/>
            <person name="Israni S."/>
            <person name="Dalin E."/>
            <person name="Tice H."/>
            <person name="Pitluck S."/>
            <person name="Di Bartolo G."/>
            <person name="Chain P."/>
            <person name="Malfatti S."/>
            <person name="Shin M."/>
            <person name="Vergez L."/>
            <person name="Schmutz J."/>
            <person name="Larimer F."/>
            <person name="Land M."/>
            <person name="Hauser L."/>
            <person name="Worsham P."/>
            <person name="Chu M."/>
            <person name="Bearden S."/>
            <person name="Garcia E."/>
            <person name="Richardson P."/>
        </authorList>
    </citation>
    <scope>NUCLEOTIDE SEQUENCE [LARGE SCALE GENOMIC DNA]</scope>
    <source>
        <strain>Pestoides F</strain>
    </source>
</reference>
<comment type="function">
    <text evidence="1">Catalyzes the oxidation of erythronate-4-phosphate to 3-hydroxy-2-oxo-4-phosphonooxybutanoate.</text>
</comment>
<comment type="catalytic activity">
    <reaction evidence="1">
        <text>4-phospho-D-erythronate + NAD(+) = (R)-3-hydroxy-2-oxo-4-phosphooxybutanoate + NADH + H(+)</text>
        <dbReference type="Rhea" id="RHEA:18829"/>
        <dbReference type="ChEBI" id="CHEBI:15378"/>
        <dbReference type="ChEBI" id="CHEBI:57540"/>
        <dbReference type="ChEBI" id="CHEBI:57945"/>
        <dbReference type="ChEBI" id="CHEBI:58538"/>
        <dbReference type="ChEBI" id="CHEBI:58766"/>
        <dbReference type="EC" id="1.1.1.290"/>
    </reaction>
</comment>
<comment type="pathway">
    <text evidence="1">Cofactor biosynthesis; pyridoxine 5'-phosphate biosynthesis; pyridoxine 5'-phosphate from D-erythrose 4-phosphate: step 2/5.</text>
</comment>
<comment type="subunit">
    <text evidence="1">Homodimer.</text>
</comment>
<comment type="subcellular location">
    <subcellularLocation>
        <location evidence="1">Cytoplasm</location>
    </subcellularLocation>
</comment>
<comment type="similarity">
    <text evidence="1">Belongs to the D-isomer specific 2-hydroxyacid dehydrogenase family. PdxB subfamily.</text>
</comment>
<comment type="sequence caution" evidence="2">
    <conflict type="erroneous initiation">
        <sequence resource="EMBL-CDS" id="ABP40378"/>
    </conflict>
</comment>
<feature type="chain" id="PRO_0000297484" description="Erythronate-4-phosphate dehydrogenase">
    <location>
        <begin position="1"/>
        <end position="375"/>
    </location>
</feature>
<feature type="active site" evidence="1">
    <location>
        <position position="208"/>
    </location>
</feature>
<feature type="active site" evidence="1">
    <location>
        <position position="237"/>
    </location>
</feature>
<feature type="active site" description="Proton donor" evidence="1">
    <location>
        <position position="254"/>
    </location>
</feature>
<feature type="binding site" evidence="1">
    <location>
        <position position="45"/>
    </location>
    <ligand>
        <name>substrate</name>
    </ligand>
</feature>
<feature type="binding site" evidence="1">
    <location>
        <position position="66"/>
    </location>
    <ligand>
        <name>substrate</name>
    </ligand>
</feature>
<feature type="binding site" evidence="1">
    <location>
        <position position="146"/>
    </location>
    <ligand>
        <name>NAD(+)</name>
        <dbReference type="ChEBI" id="CHEBI:57540"/>
    </ligand>
</feature>
<feature type="binding site" evidence="1">
    <location>
        <position position="175"/>
    </location>
    <ligand>
        <name>NAD(+)</name>
        <dbReference type="ChEBI" id="CHEBI:57540"/>
    </ligand>
</feature>
<feature type="binding site" evidence="1">
    <location>
        <position position="232"/>
    </location>
    <ligand>
        <name>NAD(+)</name>
        <dbReference type="ChEBI" id="CHEBI:57540"/>
    </ligand>
</feature>
<feature type="binding site" evidence="1">
    <location>
        <position position="257"/>
    </location>
    <ligand>
        <name>NAD(+)</name>
        <dbReference type="ChEBI" id="CHEBI:57540"/>
    </ligand>
</feature>
<feature type="binding site" evidence="1">
    <location>
        <position position="258"/>
    </location>
    <ligand>
        <name>substrate</name>
    </ligand>
</feature>
<organism>
    <name type="scientific">Yersinia pestis (strain Pestoides F)</name>
    <dbReference type="NCBI Taxonomy" id="386656"/>
    <lineage>
        <taxon>Bacteria</taxon>
        <taxon>Pseudomonadati</taxon>
        <taxon>Pseudomonadota</taxon>
        <taxon>Gammaproteobacteria</taxon>
        <taxon>Enterobacterales</taxon>
        <taxon>Yersiniaceae</taxon>
        <taxon>Yersinia</taxon>
    </lineage>
</organism>
<keyword id="KW-0963">Cytoplasm</keyword>
<keyword id="KW-0520">NAD</keyword>
<keyword id="KW-0560">Oxidoreductase</keyword>
<keyword id="KW-0664">Pyridoxine biosynthesis</keyword>